<evidence type="ECO:0000255" key="1">
    <source>
        <dbReference type="HAMAP-Rule" id="MF_01396"/>
    </source>
</evidence>
<proteinExistence type="inferred from homology"/>
<organism>
    <name type="scientific">Salmonella choleraesuis (strain SC-B67)</name>
    <dbReference type="NCBI Taxonomy" id="321314"/>
    <lineage>
        <taxon>Bacteria</taxon>
        <taxon>Pseudomonadati</taxon>
        <taxon>Pseudomonadota</taxon>
        <taxon>Gammaproteobacteria</taxon>
        <taxon>Enterobacterales</taxon>
        <taxon>Enterobacteriaceae</taxon>
        <taxon>Salmonella</taxon>
    </lineage>
</organism>
<reference key="1">
    <citation type="journal article" date="2005" name="Nucleic Acids Res.">
        <title>The genome sequence of Salmonella enterica serovar Choleraesuis, a highly invasive and resistant zoonotic pathogen.</title>
        <authorList>
            <person name="Chiu C.-H."/>
            <person name="Tang P."/>
            <person name="Chu C."/>
            <person name="Hu S."/>
            <person name="Bao Q."/>
            <person name="Yu J."/>
            <person name="Chou Y.-Y."/>
            <person name="Wang H.-S."/>
            <person name="Lee Y.-S."/>
        </authorList>
    </citation>
    <scope>NUCLEOTIDE SEQUENCE [LARGE SCALE GENOMIC DNA]</scope>
    <source>
        <strain>SC-B67</strain>
    </source>
</reference>
<protein>
    <recommendedName>
        <fullName evidence="1">ATP synthase subunit c</fullName>
    </recommendedName>
    <alternativeName>
        <fullName evidence="1">ATP synthase F(0) sector subunit c</fullName>
    </alternativeName>
    <alternativeName>
        <fullName evidence="1">F-type ATPase subunit c</fullName>
        <shortName evidence="1">F-ATPase subunit c</shortName>
    </alternativeName>
    <alternativeName>
        <fullName evidence="1">Lipid-binding protein</fullName>
    </alternativeName>
</protein>
<sequence length="79" mass="8256">MENLNMDLLYMAAAVMMGLAAIGAAIGIGILGGKFLEGAARQPDLIPLLRTQFFIVMGLVDAIPMIAVGLGLYVMFAVA</sequence>
<gene>
    <name evidence="1" type="primary">atpE</name>
    <name type="ordered locus">SCH_3782</name>
</gene>
<name>ATPL_SALCH</name>
<dbReference type="EMBL" id="AE017220">
    <property type="protein sequence ID" value="AAX67688.1"/>
    <property type="molecule type" value="Genomic_DNA"/>
</dbReference>
<dbReference type="RefSeq" id="WP_000429386.1">
    <property type="nucleotide sequence ID" value="NC_006905.1"/>
</dbReference>
<dbReference type="SMR" id="Q57HX4"/>
<dbReference type="GeneID" id="98390858"/>
<dbReference type="KEGG" id="sec:SCH_3782"/>
<dbReference type="HOGENOM" id="CLU_148047_1_0_6"/>
<dbReference type="Proteomes" id="UP000000538">
    <property type="component" value="Chromosome"/>
</dbReference>
<dbReference type="GO" id="GO:0005886">
    <property type="term" value="C:plasma membrane"/>
    <property type="evidence" value="ECO:0007669"/>
    <property type="project" value="UniProtKB-SubCell"/>
</dbReference>
<dbReference type="GO" id="GO:0045259">
    <property type="term" value="C:proton-transporting ATP synthase complex"/>
    <property type="evidence" value="ECO:0007669"/>
    <property type="project" value="UniProtKB-KW"/>
</dbReference>
<dbReference type="GO" id="GO:0033177">
    <property type="term" value="C:proton-transporting two-sector ATPase complex, proton-transporting domain"/>
    <property type="evidence" value="ECO:0007669"/>
    <property type="project" value="InterPro"/>
</dbReference>
<dbReference type="GO" id="GO:0008289">
    <property type="term" value="F:lipid binding"/>
    <property type="evidence" value="ECO:0007669"/>
    <property type="project" value="UniProtKB-KW"/>
</dbReference>
<dbReference type="GO" id="GO:0046933">
    <property type="term" value="F:proton-transporting ATP synthase activity, rotational mechanism"/>
    <property type="evidence" value="ECO:0007669"/>
    <property type="project" value="UniProtKB-UniRule"/>
</dbReference>
<dbReference type="CDD" id="cd18185">
    <property type="entry name" value="ATP-synt_Fo_c_ATPE"/>
    <property type="match status" value="1"/>
</dbReference>
<dbReference type="FunFam" id="1.20.20.10:FF:000002">
    <property type="entry name" value="ATP synthase subunit c"/>
    <property type="match status" value="1"/>
</dbReference>
<dbReference type="Gene3D" id="1.20.20.10">
    <property type="entry name" value="F1F0 ATP synthase subunit C"/>
    <property type="match status" value="1"/>
</dbReference>
<dbReference type="HAMAP" id="MF_01396">
    <property type="entry name" value="ATP_synth_c_bact"/>
    <property type="match status" value="1"/>
</dbReference>
<dbReference type="InterPro" id="IPR005953">
    <property type="entry name" value="ATP_synth_csu_bac/chlpt"/>
</dbReference>
<dbReference type="InterPro" id="IPR000454">
    <property type="entry name" value="ATP_synth_F0_csu"/>
</dbReference>
<dbReference type="InterPro" id="IPR020537">
    <property type="entry name" value="ATP_synth_F0_csu_DDCD_BS"/>
</dbReference>
<dbReference type="InterPro" id="IPR038662">
    <property type="entry name" value="ATP_synth_F0_csu_sf"/>
</dbReference>
<dbReference type="InterPro" id="IPR002379">
    <property type="entry name" value="ATPase_proteolipid_c-like_dom"/>
</dbReference>
<dbReference type="InterPro" id="IPR035921">
    <property type="entry name" value="F/V-ATP_Csub_sf"/>
</dbReference>
<dbReference type="NCBIfam" id="TIGR01260">
    <property type="entry name" value="ATP_synt_c"/>
    <property type="match status" value="1"/>
</dbReference>
<dbReference type="NCBIfam" id="NF005363">
    <property type="entry name" value="PRK06876.1"/>
    <property type="match status" value="1"/>
</dbReference>
<dbReference type="Pfam" id="PF00137">
    <property type="entry name" value="ATP-synt_C"/>
    <property type="match status" value="1"/>
</dbReference>
<dbReference type="PRINTS" id="PR00124">
    <property type="entry name" value="ATPASEC"/>
</dbReference>
<dbReference type="SUPFAM" id="SSF81333">
    <property type="entry name" value="F1F0 ATP synthase subunit C"/>
    <property type="match status" value="1"/>
</dbReference>
<dbReference type="PROSITE" id="PS00605">
    <property type="entry name" value="ATPASE_C"/>
    <property type="match status" value="1"/>
</dbReference>
<feature type="chain" id="PRO_1000184455" description="ATP synthase subunit c">
    <location>
        <begin position="1"/>
        <end position="79"/>
    </location>
</feature>
<feature type="transmembrane region" description="Helical" evidence="1">
    <location>
        <begin position="11"/>
        <end position="31"/>
    </location>
</feature>
<feature type="transmembrane region" description="Helical" evidence="1">
    <location>
        <begin position="53"/>
        <end position="73"/>
    </location>
</feature>
<feature type="site" description="Reversibly protonated during proton transport" evidence="1">
    <location>
        <position position="61"/>
    </location>
</feature>
<comment type="function">
    <text evidence="1">F(1)F(0) ATP synthase produces ATP from ADP in the presence of a proton or sodium gradient. F-type ATPases consist of two structural domains, F(1) containing the extramembraneous catalytic core and F(0) containing the membrane proton channel, linked together by a central stalk and a peripheral stalk. During catalysis, ATP synthesis in the catalytic domain of F(1) is coupled via a rotary mechanism of the central stalk subunits to proton translocation.</text>
</comment>
<comment type="function">
    <text evidence="1">Key component of the F(0) channel; it plays a direct role in translocation across the membrane. A homomeric c-ring of between 10-14 subunits forms the central stalk rotor element with the F(1) delta and epsilon subunits.</text>
</comment>
<comment type="subunit">
    <text evidence="1">F-type ATPases have 2 components, F(1) - the catalytic core - and F(0) - the membrane proton channel. F(1) has five subunits: alpha(3), beta(3), gamma(1), delta(1), epsilon(1). F(0) has three main subunits: a(1), b(2) and c(10-14). The alpha and beta chains form an alternating ring which encloses part of the gamma chain. F(1) is attached to F(0) by a central stalk formed by the gamma and epsilon chains, while a peripheral stalk is formed by the delta and b chains.</text>
</comment>
<comment type="subcellular location">
    <subcellularLocation>
        <location evidence="1">Cell inner membrane</location>
        <topology evidence="1">Multi-pass membrane protein</topology>
    </subcellularLocation>
</comment>
<comment type="similarity">
    <text evidence="1">Belongs to the ATPase C chain family.</text>
</comment>
<accession>Q57HX4</accession>
<keyword id="KW-0066">ATP synthesis</keyword>
<keyword id="KW-0997">Cell inner membrane</keyword>
<keyword id="KW-1003">Cell membrane</keyword>
<keyword id="KW-0138">CF(0)</keyword>
<keyword id="KW-0375">Hydrogen ion transport</keyword>
<keyword id="KW-0406">Ion transport</keyword>
<keyword id="KW-0446">Lipid-binding</keyword>
<keyword id="KW-0472">Membrane</keyword>
<keyword id="KW-0812">Transmembrane</keyword>
<keyword id="KW-1133">Transmembrane helix</keyword>
<keyword id="KW-0813">Transport</keyword>